<organism>
    <name type="scientific">Schizosaccharomyces pombe (strain 972 / ATCC 24843)</name>
    <name type="common">Fission yeast</name>
    <dbReference type="NCBI Taxonomy" id="284812"/>
    <lineage>
        <taxon>Eukaryota</taxon>
        <taxon>Fungi</taxon>
        <taxon>Dikarya</taxon>
        <taxon>Ascomycota</taxon>
        <taxon>Taphrinomycotina</taxon>
        <taxon>Schizosaccharomycetes</taxon>
        <taxon>Schizosaccharomycetales</taxon>
        <taxon>Schizosaccharomycetaceae</taxon>
        <taxon>Schizosaccharomyces</taxon>
    </lineage>
</organism>
<feature type="chain" id="PRO_0000352819" description="Gamma-tubulin complex subunit mod21">
    <location>
        <begin position="1"/>
        <end position="677"/>
    </location>
</feature>
<feature type="helix" evidence="4">
    <location>
        <begin position="5"/>
        <end position="17"/>
    </location>
</feature>
<feature type="helix" evidence="4">
    <location>
        <begin position="26"/>
        <end position="38"/>
    </location>
</feature>
<feature type="helix" evidence="4">
    <location>
        <begin position="46"/>
        <end position="62"/>
    </location>
</feature>
<feature type="helix" evidence="4">
    <location>
        <begin position="66"/>
        <end position="82"/>
    </location>
</feature>
<feature type="helix" evidence="4">
    <location>
        <begin position="86"/>
        <end position="102"/>
    </location>
</feature>
<gene>
    <name evidence="3" type="primary">mod21</name>
    <name evidence="3" type="ORF">SPAC806.08c</name>
</gene>
<proteinExistence type="evidence at protein level"/>
<protein>
    <recommendedName>
        <fullName>Gamma-tubulin complex subunit mod21</fullName>
    </recommendedName>
</protein>
<keyword id="KW-0002">3D-structure</keyword>
<keyword id="KW-0963">Cytoplasm</keyword>
<keyword id="KW-0206">Cytoskeleton</keyword>
<keyword id="KW-0493">Microtubule</keyword>
<keyword id="KW-1185">Reference proteome</keyword>
<sequence length="677" mass="78427">MTMSRADQILQHLLRELIHNDSLVASEWLKHSKKIIQNVPSSTLVFHEMIEHIKGICDKMGIQGREDLEMPLRNACEVLNRQTVSVKQSILHAQILKLFLELSKPPSDIHVPQIPVYKDCNKNEQEAIIQLLTSCEGDHWLMPDWSSMPDDETITEDSEEETFNGNANEITIPANIHIPIIEESDNASNNKLCTLFKKSKQPNLDFLQIKPFMFWDSSLNETVRISERSIIRDSIYMLIGYPSFFFLKNGSKIETRLSLLPKLHHMSEEILRSIMTELADYGSNLEFFRQKLTSPSDSFFKSDDQSTKNEPFLSVVFIYPQIKPHLLSCLKNTHQELIKLETEVYNATKNCTLFQFFQHVKKFVDPLLCFRFAYEKSATNMWDFVKTLEFIYSTRNYSSQMFKLYKASAIAMLLWMVNQASQITSSMTIARPLYNILILCKDFPNNFLEKDNIALQLGSIVFDQSPTLNNLLVEMEILIRSKILKLGKSLDLSFDFQSLMGEFENLIKQQEEAKKSLWSKRFSRFYYGHYVFVNTCHNFFLTLYQSFTEVDENSIFNGVFETLNNDVDDESVIGEKEKLILKQKQKCLSEFFVDDIKKLLNEELLNCQKQELPDVMENTYQISTVSGIKNDPLFTLDQTCNIIAKLADNLIHPSVPIGSSAYRCRRNLADLLFLIMP</sequence>
<name>MOD21_SCHPO</name>
<dbReference type="EMBL" id="CU329670">
    <property type="protein sequence ID" value="CAB55287.2"/>
    <property type="molecule type" value="Genomic_DNA"/>
</dbReference>
<dbReference type="PIR" id="T39100">
    <property type="entry name" value="T39100"/>
</dbReference>
<dbReference type="RefSeq" id="NP_592858.2">
    <property type="nucleotide sequence ID" value="NM_001018259.2"/>
</dbReference>
<dbReference type="PDB" id="6L80">
    <property type="method" value="X-ray"/>
    <property type="resolution" value="2.00 A"/>
    <property type="chains" value="A/C=1-109"/>
</dbReference>
<dbReference type="PDBsum" id="6L80"/>
<dbReference type="SMR" id="Q9UT52"/>
<dbReference type="BioGRID" id="279549">
    <property type="interactions" value="26"/>
</dbReference>
<dbReference type="FunCoup" id="Q9UT52">
    <property type="interactions" value="12"/>
</dbReference>
<dbReference type="STRING" id="284812.Q9UT52"/>
<dbReference type="PaxDb" id="4896-SPAC806.08c.1"/>
<dbReference type="EnsemblFungi" id="SPAC806.08c.1">
    <property type="protein sequence ID" value="SPAC806.08c.1:pep"/>
    <property type="gene ID" value="SPAC806.08c"/>
</dbReference>
<dbReference type="GeneID" id="2543117"/>
<dbReference type="KEGG" id="spo:2543117"/>
<dbReference type="PomBase" id="SPAC806.08c">
    <property type="gene designation" value="mod21"/>
</dbReference>
<dbReference type="VEuPathDB" id="FungiDB:SPAC806.08c"/>
<dbReference type="HOGENOM" id="CLU_406053_0_0_1"/>
<dbReference type="InParanoid" id="Q9UT52"/>
<dbReference type="OMA" id="DWMEITS"/>
<dbReference type="PRO" id="PR:Q9UT52"/>
<dbReference type="Proteomes" id="UP000002485">
    <property type="component" value="Chromosome I"/>
</dbReference>
<dbReference type="GO" id="GO:0005829">
    <property type="term" value="C:cytosol"/>
    <property type="evidence" value="ECO:0007005"/>
    <property type="project" value="PomBase"/>
</dbReference>
<dbReference type="GO" id="GO:0000923">
    <property type="term" value="C:equatorial microtubule organizing center"/>
    <property type="evidence" value="ECO:0000314"/>
    <property type="project" value="PomBase"/>
</dbReference>
<dbReference type="GO" id="GO:0000930">
    <property type="term" value="C:gamma-tubulin complex"/>
    <property type="evidence" value="ECO:0000318"/>
    <property type="project" value="GO_Central"/>
</dbReference>
<dbReference type="GO" id="GO:0000931">
    <property type="term" value="C:gamma-tubulin ring complex"/>
    <property type="evidence" value="ECO:0000314"/>
    <property type="project" value="PomBase"/>
</dbReference>
<dbReference type="GO" id="GO:0005874">
    <property type="term" value="C:microtubule"/>
    <property type="evidence" value="ECO:0007669"/>
    <property type="project" value="UniProtKB-KW"/>
</dbReference>
<dbReference type="GO" id="GO:0044732">
    <property type="term" value="C:mitotic spindle pole body"/>
    <property type="evidence" value="ECO:0000314"/>
    <property type="project" value="PomBase"/>
</dbReference>
<dbReference type="GO" id="GO:0005634">
    <property type="term" value="C:nucleus"/>
    <property type="evidence" value="ECO:0007005"/>
    <property type="project" value="PomBase"/>
</dbReference>
<dbReference type="GO" id="GO:0043015">
    <property type="term" value="F:gamma-tubulin binding"/>
    <property type="evidence" value="ECO:0000318"/>
    <property type="project" value="GO_Central"/>
</dbReference>
<dbReference type="GO" id="GO:0031122">
    <property type="term" value="P:cytoplasmic microtubule organization"/>
    <property type="evidence" value="ECO:0000318"/>
    <property type="project" value="GO_Central"/>
</dbReference>
<dbReference type="GO" id="GO:0051321">
    <property type="term" value="P:meiotic cell cycle"/>
    <property type="evidence" value="ECO:0000318"/>
    <property type="project" value="GO_Central"/>
</dbReference>
<dbReference type="GO" id="GO:0007020">
    <property type="term" value="P:microtubule nucleation"/>
    <property type="evidence" value="ECO:0000318"/>
    <property type="project" value="GO_Central"/>
</dbReference>
<dbReference type="GO" id="GO:0051415">
    <property type="term" value="P:microtubule nucleation by interphase microtubule organizing center"/>
    <property type="evidence" value="ECO:0000315"/>
    <property type="project" value="PomBase"/>
</dbReference>
<dbReference type="GO" id="GO:0000278">
    <property type="term" value="P:mitotic cell cycle"/>
    <property type="evidence" value="ECO:0000318"/>
    <property type="project" value="GO_Central"/>
</dbReference>
<dbReference type="GO" id="GO:0051225">
    <property type="term" value="P:spindle assembly"/>
    <property type="evidence" value="ECO:0000318"/>
    <property type="project" value="GO_Central"/>
</dbReference>
<dbReference type="InterPro" id="IPR032797">
    <property type="entry name" value="Mod21_N"/>
</dbReference>
<dbReference type="Pfam" id="PF20685">
    <property type="entry name" value="GCP5-Mod21_C"/>
    <property type="match status" value="1"/>
</dbReference>
<dbReference type="Pfam" id="PF14609">
    <property type="entry name" value="GCP5-Mod21_N"/>
    <property type="match status" value="1"/>
</dbReference>
<evidence type="ECO:0000269" key="1">
    <source>
    </source>
</evidence>
<evidence type="ECO:0000269" key="2">
    <source>
    </source>
</evidence>
<evidence type="ECO:0000312" key="3">
    <source>
        <dbReference type="PomBase" id="SPAC806.08c"/>
    </source>
</evidence>
<evidence type="ECO:0007829" key="4">
    <source>
        <dbReference type="PDB" id="6L80"/>
    </source>
</evidence>
<reference key="1">
    <citation type="journal article" date="2002" name="Nature">
        <title>The genome sequence of Schizosaccharomyces pombe.</title>
        <authorList>
            <person name="Wood V."/>
            <person name="Gwilliam R."/>
            <person name="Rajandream M.A."/>
            <person name="Lyne M.H."/>
            <person name="Lyne R."/>
            <person name="Stewart A."/>
            <person name="Sgouros J.G."/>
            <person name="Peat N."/>
            <person name="Hayles J."/>
            <person name="Baker S.G."/>
            <person name="Basham D."/>
            <person name="Bowman S."/>
            <person name="Brooks K."/>
            <person name="Brown D."/>
            <person name="Brown S."/>
            <person name="Chillingworth T."/>
            <person name="Churcher C.M."/>
            <person name="Collins M."/>
            <person name="Connor R."/>
            <person name="Cronin A."/>
            <person name="Davis P."/>
            <person name="Feltwell T."/>
            <person name="Fraser A."/>
            <person name="Gentles S."/>
            <person name="Goble A."/>
            <person name="Hamlin N."/>
            <person name="Harris D.E."/>
            <person name="Hidalgo J."/>
            <person name="Hodgson G."/>
            <person name="Holroyd S."/>
            <person name="Hornsby T."/>
            <person name="Howarth S."/>
            <person name="Huckle E.J."/>
            <person name="Hunt S."/>
            <person name="Jagels K."/>
            <person name="James K.D."/>
            <person name="Jones L."/>
            <person name="Jones M."/>
            <person name="Leather S."/>
            <person name="McDonald S."/>
            <person name="McLean J."/>
            <person name="Mooney P."/>
            <person name="Moule S."/>
            <person name="Mungall K.L."/>
            <person name="Murphy L.D."/>
            <person name="Niblett D."/>
            <person name="Odell C."/>
            <person name="Oliver K."/>
            <person name="O'Neil S."/>
            <person name="Pearson D."/>
            <person name="Quail M.A."/>
            <person name="Rabbinowitsch E."/>
            <person name="Rutherford K.M."/>
            <person name="Rutter S."/>
            <person name="Saunders D."/>
            <person name="Seeger K."/>
            <person name="Sharp S."/>
            <person name="Skelton J."/>
            <person name="Simmonds M.N."/>
            <person name="Squares R."/>
            <person name="Squares S."/>
            <person name="Stevens K."/>
            <person name="Taylor K."/>
            <person name="Taylor R.G."/>
            <person name="Tivey A."/>
            <person name="Walsh S.V."/>
            <person name="Warren T."/>
            <person name="Whitehead S."/>
            <person name="Woodward J.R."/>
            <person name="Volckaert G."/>
            <person name="Aert R."/>
            <person name="Robben J."/>
            <person name="Grymonprez B."/>
            <person name="Weltjens I."/>
            <person name="Vanstreels E."/>
            <person name="Rieger M."/>
            <person name="Schaefer M."/>
            <person name="Mueller-Auer S."/>
            <person name="Gabel C."/>
            <person name="Fuchs M."/>
            <person name="Duesterhoeft A."/>
            <person name="Fritzc C."/>
            <person name="Holzer E."/>
            <person name="Moestl D."/>
            <person name="Hilbert H."/>
            <person name="Borzym K."/>
            <person name="Langer I."/>
            <person name="Beck A."/>
            <person name="Lehrach H."/>
            <person name="Reinhardt R."/>
            <person name="Pohl T.M."/>
            <person name="Eger P."/>
            <person name="Zimmermann W."/>
            <person name="Wedler H."/>
            <person name="Wambutt R."/>
            <person name="Purnelle B."/>
            <person name="Goffeau A."/>
            <person name="Cadieu E."/>
            <person name="Dreano S."/>
            <person name="Gloux S."/>
            <person name="Lelaure V."/>
            <person name="Mottier S."/>
            <person name="Galibert F."/>
            <person name="Aves S.J."/>
            <person name="Xiang Z."/>
            <person name="Hunt C."/>
            <person name="Moore K."/>
            <person name="Hurst S.M."/>
            <person name="Lucas M."/>
            <person name="Rochet M."/>
            <person name="Gaillardin C."/>
            <person name="Tallada V.A."/>
            <person name="Garzon A."/>
            <person name="Thode G."/>
            <person name="Daga R.R."/>
            <person name="Cruzado L."/>
            <person name="Jimenez J."/>
            <person name="Sanchez M."/>
            <person name="del Rey F."/>
            <person name="Benito J."/>
            <person name="Dominguez A."/>
            <person name="Revuelta J.L."/>
            <person name="Moreno S."/>
            <person name="Armstrong J."/>
            <person name="Forsburg S.L."/>
            <person name="Cerutti L."/>
            <person name="Lowe T."/>
            <person name="McCombie W.R."/>
            <person name="Paulsen I."/>
            <person name="Potashkin J."/>
            <person name="Shpakovski G.V."/>
            <person name="Ussery D."/>
            <person name="Barrell B.G."/>
            <person name="Nurse P."/>
        </authorList>
    </citation>
    <scope>NUCLEOTIDE SEQUENCE [LARGE SCALE GENOMIC DNA]</scope>
    <source>
        <strain>972 / ATCC 24843</strain>
    </source>
</reference>
<reference key="2">
    <citation type="journal article" date="2011" name="Science">
        <title>Comparative functional genomics of the fission yeasts.</title>
        <authorList>
            <person name="Rhind N."/>
            <person name="Chen Z."/>
            <person name="Yassour M."/>
            <person name="Thompson D.A."/>
            <person name="Haas B.J."/>
            <person name="Habib N."/>
            <person name="Wapinski I."/>
            <person name="Roy S."/>
            <person name="Lin M.F."/>
            <person name="Heiman D.I."/>
            <person name="Young S.K."/>
            <person name="Furuya K."/>
            <person name="Guo Y."/>
            <person name="Pidoux A."/>
            <person name="Chen H.M."/>
            <person name="Robbertse B."/>
            <person name="Goldberg J.M."/>
            <person name="Aoki K."/>
            <person name="Bayne E.H."/>
            <person name="Berlin A.M."/>
            <person name="Desjardins C.A."/>
            <person name="Dobbs E."/>
            <person name="Dukaj L."/>
            <person name="Fan L."/>
            <person name="FitzGerald M.G."/>
            <person name="French C."/>
            <person name="Gujja S."/>
            <person name="Hansen K."/>
            <person name="Keifenheim D."/>
            <person name="Levin J.Z."/>
            <person name="Mosher R.A."/>
            <person name="Mueller C.A."/>
            <person name="Pfiffner J."/>
            <person name="Priest M."/>
            <person name="Russ C."/>
            <person name="Smialowska A."/>
            <person name="Swoboda P."/>
            <person name="Sykes S.M."/>
            <person name="Vaughn M."/>
            <person name="Vengrova S."/>
            <person name="Yoder R."/>
            <person name="Zeng Q."/>
            <person name="Allshire R."/>
            <person name="Baulcombe D."/>
            <person name="Birren B.W."/>
            <person name="Brown W."/>
            <person name="Ekwall K."/>
            <person name="Kellis M."/>
            <person name="Leatherwood J."/>
            <person name="Levin H."/>
            <person name="Margalit H."/>
            <person name="Martienssen R."/>
            <person name="Nieduszynski C.A."/>
            <person name="Spatafora J.W."/>
            <person name="Friedman N."/>
            <person name="Dalgaard J.Z."/>
            <person name="Baumann P."/>
            <person name="Niki H."/>
            <person name="Regev A."/>
            <person name="Nusbaum C."/>
        </authorList>
    </citation>
    <scope>REVISION OF GENE MODEL</scope>
</reference>
<reference key="3">
    <citation type="journal article" date="2006" name="Mol. Biol. Cell">
        <title>Noncore components of the fission yeast gamma-tubulin complex.</title>
        <authorList>
            <person name="Anders A."/>
            <person name="Lourenco P.C.C."/>
            <person name="Sawin K.E."/>
        </authorList>
    </citation>
    <scope>IDENTIFICATION IN THE GAMMA-TUBULIN COMPLEX</scope>
    <scope>SUBCELLULAR LOCATION</scope>
    <scope>FUNCTION</scope>
</reference>
<reference key="4">
    <citation type="journal article" date="2006" name="Nat. Biotechnol.">
        <title>ORFeome cloning and global analysis of protein localization in the fission yeast Schizosaccharomyces pombe.</title>
        <authorList>
            <person name="Matsuyama A."/>
            <person name="Arai R."/>
            <person name="Yashiroda Y."/>
            <person name="Shirai A."/>
            <person name="Kamata A."/>
            <person name="Sekido S."/>
            <person name="Kobayashi Y."/>
            <person name="Hashimoto A."/>
            <person name="Hamamoto M."/>
            <person name="Hiraoka Y."/>
            <person name="Horinouchi S."/>
            <person name="Yoshida M."/>
        </authorList>
    </citation>
    <scope>SUBCELLULAR LOCATION [LARGE SCALE ANALYSIS]</scope>
</reference>
<accession>Q9UT52</accession>
<comment type="function">
    <text evidence="2">Component of the gamma-tubulin complex that is required for the regulation of both interphase microtubule organization and nucleation, and mitotic bipolar spindles. Required for correct septation.</text>
</comment>
<comment type="subunit">
    <text evidence="2">Component of the gamma-tubulin complex composed of at least alp4, alp6, alp16, ghf1, gtb1 and mod21.</text>
</comment>
<comment type="subcellular location">
    <subcellularLocation>
        <location evidence="1 2">Cytoplasm</location>
        <location evidence="1 2">Cytoskeleton</location>
        <location evidence="1 2">Microtubule organizing center</location>
        <location evidence="1 2">Spindle pole body</location>
    </subcellularLocation>
    <text>Localizes to the SPB and also to the equatorial MTOC.</text>
</comment>